<accession>B1IXY9</accession>
<gene>
    <name evidence="1" type="primary">tolB</name>
    <name type="ordered locus">EcolC_2915</name>
</gene>
<organism>
    <name type="scientific">Escherichia coli (strain ATCC 8739 / DSM 1576 / NBRC 3972 / NCIMB 8545 / WDCM 00012 / Crooks)</name>
    <dbReference type="NCBI Taxonomy" id="481805"/>
    <lineage>
        <taxon>Bacteria</taxon>
        <taxon>Pseudomonadati</taxon>
        <taxon>Pseudomonadota</taxon>
        <taxon>Gammaproteobacteria</taxon>
        <taxon>Enterobacterales</taxon>
        <taxon>Enterobacteriaceae</taxon>
        <taxon>Escherichia</taxon>
    </lineage>
</organism>
<protein>
    <recommendedName>
        <fullName evidence="1">Tol-Pal system protein TolB</fullName>
    </recommendedName>
</protein>
<evidence type="ECO:0000255" key="1">
    <source>
        <dbReference type="HAMAP-Rule" id="MF_00671"/>
    </source>
</evidence>
<feature type="signal peptide" evidence="1">
    <location>
        <begin position="1"/>
        <end position="21"/>
    </location>
</feature>
<feature type="chain" id="PRO_5000314232" description="Tol-Pal system protein TolB" evidence="1">
    <location>
        <begin position="22"/>
        <end position="430"/>
    </location>
</feature>
<reference key="1">
    <citation type="submission" date="2008-02" db="EMBL/GenBank/DDBJ databases">
        <title>Complete sequence of Escherichia coli C str. ATCC 8739.</title>
        <authorList>
            <person name="Copeland A."/>
            <person name="Lucas S."/>
            <person name="Lapidus A."/>
            <person name="Glavina del Rio T."/>
            <person name="Dalin E."/>
            <person name="Tice H."/>
            <person name="Bruce D."/>
            <person name="Goodwin L."/>
            <person name="Pitluck S."/>
            <person name="Kiss H."/>
            <person name="Brettin T."/>
            <person name="Detter J.C."/>
            <person name="Han C."/>
            <person name="Kuske C.R."/>
            <person name="Schmutz J."/>
            <person name="Larimer F."/>
            <person name="Land M."/>
            <person name="Hauser L."/>
            <person name="Kyrpides N."/>
            <person name="Mikhailova N."/>
            <person name="Ingram L."/>
            <person name="Richardson P."/>
        </authorList>
    </citation>
    <scope>NUCLEOTIDE SEQUENCE [LARGE SCALE GENOMIC DNA]</scope>
    <source>
        <strain>ATCC 8739 / DSM 1576 / NBRC 3972 / NCIMB 8545 / WDCM 00012 / Crooks</strain>
    </source>
</reference>
<keyword id="KW-0131">Cell cycle</keyword>
<keyword id="KW-0132">Cell division</keyword>
<keyword id="KW-0574">Periplasm</keyword>
<keyword id="KW-0732">Signal</keyword>
<comment type="function">
    <text evidence="1">Part of the Tol-Pal system, which plays a role in outer membrane invagination during cell division and is important for maintaining outer membrane integrity. TolB occupies a key intermediary position in the Tol-Pal system because it communicates directly with both membrane-embedded components, Pal in the outer membrane and TolA in the inner membrane.</text>
</comment>
<comment type="subunit">
    <text evidence="1">The Tol-Pal system is composed of five core proteins: the inner membrane proteins TolA, TolQ and TolR, the periplasmic protein TolB and the outer membrane protein Pal. They form a network linking the inner and outer membranes and the peptidoglycan layer.</text>
</comment>
<comment type="subcellular location">
    <subcellularLocation>
        <location evidence="1">Periplasm</location>
    </subcellularLocation>
</comment>
<comment type="similarity">
    <text evidence="1">Belongs to the TolB family.</text>
</comment>
<proteinExistence type="inferred from homology"/>
<sequence length="430" mass="45956">MKQALRVAFGFLILWASVLHAEVRIVIDSGVDSGRPIGVVPFQWAGPGAAPEDIGGIVAADLRNSGKFNPLDRARLPQQPGSAQEVQPAAWSALGIDAVVVGQVTPNPDGSYNVAYQLVDTGGAPGTVLAQNSYKVNKQWLRYAGHTASDEVFEKLTGIKGAFRTRIAYVVQTNGGQFPYELRVSDYDGYNQFVVHRSPQPLMSPAWSPDGSKLAYVTFESGRSALVIQTLANGAVRQVASFPRHNGAPAFSPDGSKLAFALSKTGSLNLYVMDLASGQIRQVTDGRSNNTEPTWFPDSQNLAFTSDQAGRPQVYKVNINGGAPQRITWEGSQNQDADVSSDGKFMVMVSSNGGQQHIAKQDLATGGVQVLSSTFLDETPSLAPNGTMVIYSSSQGMGSVLNLVSTDGRFKARLPATDGQVKFPAWSPYL</sequence>
<name>TOLB_ECOLC</name>
<dbReference type="EMBL" id="CP000946">
    <property type="protein sequence ID" value="ACA78542.1"/>
    <property type="molecule type" value="Genomic_DNA"/>
</dbReference>
<dbReference type="RefSeq" id="WP_001295307.1">
    <property type="nucleotide sequence ID" value="NZ_MTFT01000029.1"/>
</dbReference>
<dbReference type="SMR" id="B1IXY9"/>
<dbReference type="GeneID" id="93776744"/>
<dbReference type="KEGG" id="ecl:EcolC_2915"/>
<dbReference type="HOGENOM" id="CLU_047123_0_0_6"/>
<dbReference type="GO" id="GO:0042597">
    <property type="term" value="C:periplasmic space"/>
    <property type="evidence" value="ECO:0007669"/>
    <property type="project" value="UniProtKB-SubCell"/>
</dbReference>
<dbReference type="GO" id="GO:0051301">
    <property type="term" value="P:cell division"/>
    <property type="evidence" value="ECO:0007669"/>
    <property type="project" value="UniProtKB-UniRule"/>
</dbReference>
<dbReference type="GO" id="GO:0017038">
    <property type="term" value="P:protein import"/>
    <property type="evidence" value="ECO:0007669"/>
    <property type="project" value="InterPro"/>
</dbReference>
<dbReference type="FunFam" id="2.120.10.30:FF:000022">
    <property type="entry name" value="Tol-Pal system protein TolB"/>
    <property type="match status" value="1"/>
</dbReference>
<dbReference type="FunFam" id="3.40.50.10070:FF:000001">
    <property type="entry name" value="Tol-Pal system protein TolB"/>
    <property type="match status" value="1"/>
</dbReference>
<dbReference type="Gene3D" id="2.120.10.30">
    <property type="entry name" value="TolB, C-terminal domain"/>
    <property type="match status" value="1"/>
</dbReference>
<dbReference type="Gene3D" id="3.40.50.10070">
    <property type="entry name" value="TolB, N-terminal domain"/>
    <property type="match status" value="1"/>
</dbReference>
<dbReference type="HAMAP" id="MF_00671">
    <property type="entry name" value="TolB"/>
    <property type="match status" value="1"/>
</dbReference>
<dbReference type="InterPro" id="IPR011042">
    <property type="entry name" value="6-blade_b-propeller_TolB-like"/>
</dbReference>
<dbReference type="InterPro" id="IPR011659">
    <property type="entry name" value="PD40"/>
</dbReference>
<dbReference type="InterPro" id="IPR014167">
    <property type="entry name" value="Tol-Pal_TolB"/>
</dbReference>
<dbReference type="InterPro" id="IPR007195">
    <property type="entry name" value="TolB_N"/>
</dbReference>
<dbReference type="NCBIfam" id="TIGR02800">
    <property type="entry name" value="propeller_TolB"/>
    <property type="match status" value="1"/>
</dbReference>
<dbReference type="PANTHER" id="PTHR36842:SF1">
    <property type="entry name" value="PROTEIN TOLB"/>
    <property type="match status" value="1"/>
</dbReference>
<dbReference type="PANTHER" id="PTHR36842">
    <property type="entry name" value="PROTEIN TOLB HOMOLOG"/>
    <property type="match status" value="1"/>
</dbReference>
<dbReference type="Pfam" id="PF07676">
    <property type="entry name" value="PD40"/>
    <property type="match status" value="4"/>
</dbReference>
<dbReference type="Pfam" id="PF04052">
    <property type="entry name" value="TolB_N"/>
    <property type="match status" value="1"/>
</dbReference>
<dbReference type="SUPFAM" id="SSF52964">
    <property type="entry name" value="TolB, N-terminal domain"/>
    <property type="match status" value="1"/>
</dbReference>
<dbReference type="SUPFAM" id="SSF69304">
    <property type="entry name" value="Tricorn protease N-terminal domain"/>
    <property type="match status" value="1"/>
</dbReference>